<sequence>MVRCLWAAECCWLPPKRKQPFEDTMYTTYVARQPILNAKRHTLGYELLFRDGEKNAFPEYMDADRATYRLIVENFLSLGTNPRIARSRCFINFPHKSLIRRLPLTLPREQIVVEILETCQPTDDLFEAVQELSQRGYLLALDDFVYSPAWERFLPYVQIVKIDIMAMGLDKACEFVRGRLAQGSRRRFLAERVETEDEFHQARHAGFTFFQGYFFSKPEIIKQRYVSPEHVIAMQLFREVCQPEVDYVRVERLVAQDIALSYKLLRFVNTMSDRISVSISSFRQALVYLGQDKLRIFVSLAVASYISSKKPKELYNLSLQRAQFCQLMATHTHFKAHREQAFLIGMFSVLDALLDTSIEQLVEQLPLADDVKLALREREGPLGTLLDLEECFEKADWQGVEQHCLELGFDLEDVRQELIEAQRWSQDINRLI</sequence>
<dbReference type="EC" id="3.1.4.52" evidence="3"/>
<dbReference type="EMBL" id="AE003852">
    <property type="protein sequence ID" value="AAF93314.1"/>
    <property type="molecule type" value="Genomic_DNA"/>
</dbReference>
<dbReference type="PIR" id="H82358">
    <property type="entry name" value="H82358"/>
</dbReference>
<dbReference type="SMR" id="Q9KVK6"/>
<dbReference type="STRING" id="243277.VC_0137"/>
<dbReference type="DNASU" id="2615266"/>
<dbReference type="EnsemblBacteria" id="AAF93314">
    <property type="protein sequence ID" value="AAF93314"/>
    <property type="gene ID" value="VC_0137"/>
</dbReference>
<dbReference type="KEGG" id="vch:VC_0137"/>
<dbReference type="eggNOG" id="COG3434">
    <property type="taxonomic scope" value="Bacteria"/>
</dbReference>
<dbReference type="HOGENOM" id="CLU_044951_2_0_6"/>
<dbReference type="Proteomes" id="UP000000584">
    <property type="component" value="Chromosome 1"/>
</dbReference>
<dbReference type="GO" id="GO:0071111">
    <property type="term" value="F:cyclic-guanylate-specific phosphodiesterase activity"/>
    <property type="evidence" value="ECO:0007669"/>
    <property type="project" value="UniProtKB-EC"/>
</dbReference>
<dbReference type="Gene3D" id="3.20.20.450">
    <property type="entry name" value="EAL domain"/>
    <property type="match status" value="1"/>
</dbReference>
<dbReference type="Gene3D" id="1.10.3210.10">
    <property type="entry name" value="Hypothetical protein af1432"/>
    <property type="match status" value="1"/>
</dbReference>
<dbReference type="InterPro" id="IPR014408">
    <property type="entry name" value="dGMP_Pdiesterase_EAL/HD-GYP"/>
</dbReference>
<dbReference type="InterPro" id="IPR001633">
    <property type="entry name" value="EAL_dom"/>
</dbReference>
<dbReference type="InterPro" id="IPR035919">
    <property type="entry name" value="EAL_sf"/>
</dbReference>
<dbReference type="InterPro" id="IPR013976">
    <property type="entry name" value="HDOD"/>
</dbReference>
<dbReference type="InterPro" id="IPR052340">
    <property type="entry name" value="RNase_Y/CdgJ"/>
</dbReference>
<dbReference type="PANTHER" id="PTHR33525">
    <property type="match status" value="1"/>
</dbReference>
<dbReference type="PANTHER" id="PTHR33525:SF4">
    <property type="entry name" value="CYCLIC DI-GMP PHOSPHODIESTERASE CDGJ"/>
    <property type="match status" value="1"/>
</dbReference>
<dbReference type="Pfam" id="PF00563">
    <property type="entry name" value="EAL"/>
    <property type="match status" value="1"/>
</dbReference>
<dbReference type="Pfam" id="PF08668">
    <property type="entry name" value="HDOD"/>
    <property type="match status" value="1"/>
</dbReference>
<dbReference type="PIRSF" id="PIRSF003180">
    <property type="entry name" value="DiGMPpdiest_YuxH"/>
    <property type="match status" value="1"/>
</dbReference>
<dbReference type="SMART" id="SM00052">
    <property type="entry name" value="EAL"/>
    <property type="match status" value="1"/>
</dbReference>
<dbReference type="SUPFAM" id="SSF141868">
    <property type="entry name" value="EAL domain-like"/>
    <property type="match status" value="1"/>
</dbReference>
<dbReference type="SUPFAM" id="SSF109604">
    <property type="entry name" value="HD-domain/PDEase-like"/>
    <property type="match status" value="1"/>
</dbReference>
<dbReference type="PROSITE" id="PS50883">
    <property type="entry name" value="EAL"/>
    <property type="match status" value="1"/>
</dbReference>
<dbReference type="PROSITE" id="PS51833">
    <property type="entry name" value="HDOD"/>
    <property type="match status" value="1"/>
</dbReference>
<protein>
    <recommendedName>
        <fullName evidence="5">Cyclic di-GMP phosphodiesterase CdgJ</fullName>
        <ecNumber evidence="3">3.1.4.52</ecNumber>
    </recommendedName>
</protein>
<name>CDGJ_VIBCH</name>
<evidence type="ECO:0000255" key="1">
    <source>
        <dbReference type="PROSITE-ProRule" id="PRU00074"/>
    </source>
</evidence>
<evidence type="ECO:0000255" key="2">
    <source>
        <dbReference type="PROSITE-ProRule" id="PRU01177"/>
    </source>
</evidence>
<evidence type="ECO:0000269" key="3">
    <source>
    </source>
</evidence>
<evidence type="ECO:0000303" key="4">
    <source>
    </source>
</evidence>
<evidence type="ECO:0000305" key="5"/>
<evidence type="ECO:0000312" key="6">
    <source>
        <dbReference type="EMBL" id="AAF93314.1"/>
    </source>
</evidence>
<gene>
    <name evidence="4" type="primary">cdgJ</name>
    <name evidence="6" type="ordered locus">VC_0137</name>
</gene>
<comment type="function">
    <text evidence="3">Phosphodiesterase (PDE) that catalyzes the hydrolysis of cyclic diguanylate (c-di-GMP). Positively regulates motility and negatively regulates biofilm formation.</text>
</comment>
<comment type="catalytic activity">
    <reaction evidence="3">
        <text>3',3'-c-di-GMP + H2O = 5'-phosphoguanylyl(3'-&gt;5')guanosine + H(+)</text>
        <dbReference type="Rhea" id="RHEA:24902"/>
        <dbReference type="ChEBI" id="CHEBI:15377"/>
        <dbReference type="ChEBI" id="CHEBI:15378"/>
        <dbReference type="ChEBI" id="CHEBI:58754"/>
        <dbReference type="ChEBI" id="CHEBI:58805"/>
        <dbReference type="EC" id="3.1.4.52"/>
    </reaction>
</comment>
<comment type="disruption phenotype">
    <text evidence="3">Deletion mutant exhibits decreased motility. Mutation causes a slight decrease in flaA expression but does not affect flagellar morphology. Mutant has enhanced biofilm formation and vps gene expression.</text>
</comment>
<feature type="chain" id="PRO_0000439658" description="Cyclic di-GMP phosphodiesterase CdgJ">
    <location>
        <begin position="1"/>
        <end position="432"/>
    </location>
</feature>
<feature type="domain" description="EAL" evidence="1">
    <location>
        <begin position="1"/>
        <end position="232"/>
    </location>
</feature>
<feature type="domain" description="HDOD" evidence="2">
    <location>
        <begin position="226"/>
        <end position="413"/>
    </location>
</feature>
<feature type="mutagenesis site" description="Lack of activity." evidence="3">
    <original>ELL</original>
    <variation>AAA</variation>
    <location>
        <begin position="46"/>
        <end position="48"/>
    </location>
</feature>
<reference key="1">
    <citation type="journal article" date="2000" name="Nature">
        <title>DNA sequence of both chromosomes of the cholera pathogen Vibrio cholerae.</title>
        <authorList>
            <person name="Heidelberg J.F."/>
            <person name="Eisen J.A."/>
            <person name="Nelson W.C."/>
            <person name="Clayton R.A."/>
            <person name="Gwinn M.L."/>
            <person name="Dodson R.J."/>
            <person name="Haft D.H."/>
            <person name="Hickey E.K."/>
            <person name="Peterson J.D."/>
            <person name="Umayam L.A."/>
            <person name="Gill S.R."/>
            <person name="Nelson K.E."/>
            <person name="Read T.D."/>
            <person name="Tettelin H."/>
            <person name="Richardson D.L."/>
            <person name="Ermolaeva M.D."/>
            <person name="Vamathevan J.J."/>
            <person name="Bass S."/>
            <person name="Qin H."/>
            <person name="Dragoi I."/>
            <person name="Sellers P."/>
            <person name="McDonald L.A."/>
            <person name="Utterback T.R."/>
            <person name="Fleischmann R.D."/>
            <person name="Nierman W.C."/>
            <person name="White O."/>
            <person name="Salzberg S.L."/>
            <person name="Smith H.O."/>
            <person name="Colwell R.R."/>
            <person name="Mekalanos J.J."/>
            <person name="Venter J.C."/>
            <person name="Fraser C.M."/>
        </authorList>
    </citation>
    <scope>NUCLEOTIDE SEQUENCE [LARGE SCALE GENOMIC DNA]</scope>
    <source>
        <strain>ATCC 39315 / El Tor Inaba N16961</strain>
    </source>
</reference>
<reference key="2">
    <citation type="journal article" date="2010" name="J. Bacteriol.">
        <title>Identification and characterization of a phosphodiesterase that inversely regulates motility and biofilm formation in Vibrio cholerae.</title>
        <authorList>
            <person name="Liu X."/>
            <person name="Beyhan S."/>
            <person name="Lim B."/>
            <person name="Linington R.G."/>
            <person name="Yildiz F.H."/>
        </authorList>
    </citation>
    <scope>FUNCTION</scope>
    <scope>CATALYTIC ACTIVITY</scope>
    <scope>DISRUPTION PHENOTYPE</scope>
    <scope>MUTAGENESIS OF 46-GLU--LEU-48</scope>
    <source>
        <strain>El Tor A1552 / Serotype O1</strain>
    </source>
</reference>
<organism>
    <name type="scientific">Vibrio cholerae serotype O1 (strain ATCC 39315 / El Tor Inaba N16961)</name>
    <dbReference type="NCBI Taxonomy" id="243277"/>
    <lineage>
        <taxon>Bacteria</taxon>
        <taxon>Pseudomonadati</taxon>
        <taxon>Pseudomonadota</taxon>
        <taxon>Gammaproteobacteria</taxon>
        <taxon>Vibrionales</taxon>
        <taxon>Vibrionaceae</taxon>
        <taxon>Vibrio</taxon>
    </lineage>
</organism>
<accession>Q9KVK6</accession>
<keyword id="KW-0973">c-di-GMP</keyword>
<keyword id="KW-0378">Hydrolase</keyword>
<keyword id="KW-1185">Reference proteome</keyword>
<proteinExistence type="evidence at protein level"/>